<reference key="1">
    <citation type="journal article" date="2000" name="Nucleic Acids Res.">
        <title>Complete genome sequence of the alkaliphilic bacterium Bacillus halodurans and genomic sequence comparison with Bacillus subtilis.</title>
        <authorList>
            <person name="Takami H."/>
            <person name="Nakasone K."/>
            <person name="Takaki Y."/>
            <person name="Maeno G."/>
            <person name="Sasaki R."/>
            <person name="Masui N."/>
            <person name="Fuji F."/>
            <person name="Hirama C."/>
            <person name="Nakamura Y."/>
            <person name="Ogasawara N."/>
            <person name="Kuhara S."/>
            <person name="Horikoshi K."/>
        </authorList>
    </citation>
    <scope>NUCLEOTIDE SEQUENCE [LARGE SCALE GENOMIC DNA]</scope>
    <source>
        <strain>ATCC BAA-125 / DSM 18197 / FERM 7344 / JCM 9153 / C-125</strain>
    </source>
</reference>
<reference key="2">
    <citation type="journal article" date="2013" name="Biochemistry">
        <title>In vitro reconstitution of the radical S-adenosylmethionine enzyme MqnC involved in the biosynthesis of futalosine-derived menaquinone.</title>
        <authorList>
            <person name="Cooper L.E."/>
            <person name="Fedoseyenko D."/>
            <person name="Abdelwahed S.H."/>
            <person name="Kim S.H."/>
            <person name="Dairi T."/>
            <person name="Begley T.P."/>
        </authorList>
    </citation>
    <scope>FUNCTION</scope>
    <scope>CATALYTIC ACTIVITY</scope>
    <scope>COFACTOR</scope>
    <scope>REACTION MECHANISM</scope>
    <source>
        <strain>ATCC BAA-125 / DSM 18197 / FERM 7344 / JCM 9153 / C-125</strain>
    </source>
</reference>
<keyword id="KW-0004">4Fe-4S</keyword>
<keyword id="KW-0408">Iron</keyword>
<keyword id="KW-0411">Iron-sulfur</keyword>
<keyword id="KW-0474">Menaquinone biosynthesis</keyword>
<keyword id="KW-0479">Metal-binding</keyword>
<keyword id="KW-0560">Oxidoreductase</keyword>
<keyword id="KW-1185">Reference proteome</keyword>
<keyword id="KW-0949">S-adenosyl-L-methionine</keyword>
<comment type="function">
    <text evidence="1 3">Radical SAM enzyme that catalyzes the cyclization of dehypoxanthine futalosine (DHFL) into cyclic dehypoxanthine futalosine (CDHFL), a step in the biosynthesis of menaquinone (MK, vitamin K2).</text>
</comment>
<comment type="catalytic activity">
    <reaction evidence="1 3">
        <text>dehypoxanthine futalosine + S-adenosyl-L-methionine = cyclic dehypoxanthinylfutalosinate + 5'-deoxyadenosine + L-methionine + H(+)</text>
        <dbReference type="Rhea" id="RHEA:33083"/>
        <dbReference type="ChEBI" id="CHEBI:15378"/>
        <dbReference type="ChEBI" id="CHEBI:17319"/>
        <dbReference type="ChEBI" id="CHEBI:57844"/>
        <dbReference type="ChEBI" id="CHEBI:58864"/>
        <dbReference type="ChEBI" id="CHEBI:59789"/>
        <dbReference type="ChEBI" id="CHEBI:64270"/>
        <dbReference type="EC" id="1.21.98.1"/>
    </reaction>
</comment>
<comment type="cofactor">
    <cofactor evidence="3">
        <name>[4Fe-4S] cluster</name>
        <dbReference type="ChEBI" id="CHEBI:49883"/>
    </cofactor>
    <text evidence="3">Binds 1 [4Fe-4S] cluster. The cluster is likely coordinated with 3 cysteines and an exchangeable S-adenosyl-L-methionine.</text>
</comment>
<comment type="pathway">
    <text evidence="1">Quinol/quinone metabolism; menaquinone biosynthesis.</text>
</comment>
<comment type="similarity">
    <text evidence="1">Belongs to the radical SAM superfamily. MqnC family.</text>
</comment>
<sequence>MSIDGILERAVNGERLSMEDAVKLYESDEVEKMGAAANQIMLKWHPEPITTFVIGRNVNYTNFCDTYCRFCAFYRAPGHKEGYVLDDEVILKKIQETIDVGGTEILMQGGTNPDLTIDYYTDLLRNIKERFPNIWMHSFSPAEVWKIAEVSSMSVEEVLRELHEAGLDSMPGGGAEILTEETRLRVSRLKITWEQWINAMKATKKVGMHGTATMVIGFGESFEERALHLQRVRDAQDETECFTAFISWLFQPENTGMYKTKKLTPRDYLKNVAISRLFLDNIPNFQSSWVTMGPEVGKLSLQYGCNDFGSTMIEENVVSAAGTTHKVNTNKILQLIREAGKIPAQRTTSYEIIRTFEDKEAAEKDFVMQN</sequence>
<feature type="chain" id="PRO_0000425603" description="Cyclic dehypoxanthine futalosine synthase">
    <location>
        <begin position="1"/>
        <end position="370"/>
    </location>
</feature>
<feature type="domain" description="Radical SAM core" evidence="2">
    <location>
        <begin position="50"/>
        <end position="295"/>
    </location>
</feature>
<feature type="binding site" evidence="1">
    <location>
        <position position="64"/>
    </location>
    <ligand>
        <name>[4Fe-4S] cluster</name>
        <dbReference type="ChEBI" id="CHEBI:49883"/>
        <note>4Fe-4S-S-AdoMet</note>
    </ligand>
</feature>
<feature type="binding site" evidence="1">
    <location>
        <position position="68"/>
    </location>
    <ligand>
        <name>[4Fe-4S] cluster</name>
        <dbReference type="ChEBI" id="CHEBI:49883"/>
        <note>4Fe-4S-S-AdoMet</note>
    </ligand>
</feature>
<feature type="binding site" evidence="1">
    <location>
        <position position="71"/>
    </location>
    <ligand>
        <name>[4Fe-4S] cluster</name>
        <dbReference type="ChEBI" id="CHEBI:49883"/>
        <note>4Fe-4S-S-AdoMet</note>
    </ligand>
</feature>
<proteinExistence type="evidence at protein level"/>
<protein>
    <recommendedName>
        <fullName evidence="1">Cyclic dehypoxanthine futalosine synthase</fullName>
        <shortName evidence="1">Cyclic DHFL synthase</shortName>
        <ecNumber evidence="1 3">1.21.98.1</ecNumber>
    </recommendedName>
    <alternativeName>
        <fullName evidence="1">Dehypoxanthine futalosine cyclase</fullName>
        <shortName evidence="1">DHFL cyclase</shortName>
    </alternativeName>
    <alternativeName>
        <fullName evidence="1">Menaquinone biosynthetic enzyme MqnC</fullName>
    </alternativeName>
</protein>
<name>MQNC_HALH5</name>
<gene>
    <name evidence="1" type="primary">mqnC</name>
    <name type="ordered locus">BH3143</name>
</gene>
<accession>Q9K864</accession>
<evidence type="ECO:0000255" key="1">
    <source>
        <dbReference type="HAMAP-Rule" id="MF_00992"/>
    </source>
</evidence>
<evidence type="ECO:0000255" key="2">
    <source>
        <dbReference type="PROSITE-ProRule" id="PRU01266"/>
    </source>
</evidence>
<evidence type="ECO:0000269" key="3">
    <source>
    </source>
</evidence>
<dbReference type="EC" id="1.21.98.1" evidence="1 3"/>
<dbReference type="EMBL" id="BA000004">
    <property type="protein sequence ID" value="BAB06862.1"/>
    <property type="molecule type" value="Genomic_DNA"/>
</dbReference>
<dbReference type="PIR" id="G84042">
    <property type="entry name" value="G84042"/>
</dbReference>
<dbReference type="RefSeq" id="WP_010899286.1">
    <property type="nucleotide sequence ID" value="NC_002570.2"/>
</dbReference>
<dbReference type="SMR" id="Q9K864"/>
<dbReference type="STRING" id="272558.gene:10729055"/>
<dbReference type="KEGG" id="bha:BH3143"/>
<dbReference type="eggNOG" id="COG1060">
    <property type="taxonomic scope" value="Bacteria"/>
</dbReference>
<dbReference type="HOGENOM" id="CLU_040406_1_0_9"/>
<dbReference type="OrthoDB" id="9802027at2"/>
<dbReference type="BioCyc" id="MetaCyc:MONOMER-18222"/>
<dbReference type="BRENDA" id="1.21.98.1">
    <property type="organism ID" value="661"/>
</dbReference>
<dbReference type="UniPathway" id="UPA00079"/>
<dbReference type="Proteomes" id="UP000001258">
    <property type="component" value="Chromosome"/>
</dbReference>
<dbReference type="GO" id="GO:0051539">
    <property type="term" value="F:4 iron, 4 sulfur cluster binding"/>
    <property type="evidence" value="ECO:0007669"/>
    <property type="project" value="UniProtKB-KW"/>
</dbReference>
<dbReference type="GO" id="GO:0044689">
    <property type="term" value="F:7,8-didemethyl-8-hydroxy-5-deazariboflavin synthase activity"/>
    <property type="evidence" value="ECO:0007669"/>
    <property type="project" value="TreeGrafter"/>
</dbReference>
<dbReference type="GO" id="GO:0005506">
    <property type="term" value="F:iron ion binding"/>
    <property type="evidence" value="ECO:0007669"/>
    <property type="project" value="UniProtKB-UniRule"/>
</dbReference>
<dbReference type="GO" id="GO:0046992">
    <property type="term" value="F:oxidoreductase activity, acting on X-H and Y-H to form an X-Y bond"/>
    <property type="evidence" value="ECO:0007669"/>
    <property type="project" value="UniProtKB-UniRule"/>
</dbReference>
<dbReference type="GO" id="GO:0016765">
    <property type="term" value="F:transferase activity, transferring alkyl or aryl (other than methyl) groups"/>
    <property type="evidence" value="ECO:0007669"/>
    <property type="project" value="InterPro"/>
</dbReference>
<dbReference type="GO" id="GO:0009234">
    <property type="term" value="P:menaquinone biosynthetic process"/>
    <property type="evidence" value="ECO:0007669"/>
    <property type="project" value="UniProtKB-UniRule"/>
</dbReference>
<dbReference type="CDD" id="cd01335">
    <property type="entry name" value="Radical_SAM"/>
    <property type="match status" value="1"/>
</dbReference>
<dbReference type="Gene3D" id="3.20.20.70">
    <property type="entry name" value="Aldolase class I"/>
    <property type="match status" value="1"/>
</dbReference>
<dbReference type="HAMAP" id="MF_00992">
    <property type="entry name" value="MqnC"/>
    <property type="match status" value="1"/>
</dbReference>
<dbReference type="InterPro" id="IPR013785">
    <property type="entry name" value="Aldolase_TIM"/>
</dbReference>
<dbReference type="InterPro" id="IPR045567">
    <property type="entry name" value="CofH/MnqC-like_C"/>
</dbReference>
<dbReference type="InterPro" id="IPR022431">
    <property type="entry name" value="Cyclic_DHFL_synthase_mqnC"/>
</dbReference>
<dbReference type="InterPro" id="IPR006638">
    <property type="entry name" value="Elp3/MiaA/NifB-like_rSAM"/>
</dbReference>
<dbReference type="InterPro" id="IPR034405">
    <property type="entry name" value="F420"/>
</dbReference>
<dbReference type="InterPro" id="IPR020050">
    <property type="entry name" value="FO_synthase_su2"/>
</dbReference>
<dbReference type="InterPro" id="IPR007197">
    <property type="entry name" value="rSAM"/>
</dbReference>
<dbReference type="NCBIfam" id="TIGR00423">
    <property type="entry name" value="CofH family radical SAM protein"/>
    <property type="match status" value="1"/>
</dbReference>
<dbReference type="NCBIfam" id="TIGR03699">
    <property type="entry name" value="menaquin_MqnC"/>
    <property type="match status" value="1"/>
</dbReference>
<dbReference type="PANTHER" id="PTHR43076">
    <property type="entry name" value="FO SYNTHASE (COFH)"/>
    <property type="match status" value="1"/>
</dbReference>
<dbReference type="PANTHER" id="PTHR43076:SF1">
    <property type="entry name" value="LIPOYL SYNTHASE 2"/>
    <property type="match status" value="1"/>
</dbReference>
<dbReference type="Pfam" id="PF19288">
    <property type="entry name" value="CofH_C"/>
    <property type="match status" value="1"/>
</dbReference>
<dbReference type="Pfam" id="PF04055">
    <property type="entry name" value="Radical_SAM"/>
    <property type="match status" value="1"/>
</dbReference>
<dbReference type="PIRSF" id="PIRSF004762">
    <property type="entry name" value="CHP00423"/>
    <property type="match status" value="1"/>
</dbReference>
<dbReference type="SFLD" id="SFLDF00343">
    <property type="entry name" value="aminofutalosine_synthase_(mqnE"/>
    <property type="match status" value="1"/>
</dbReference>
<dbReference type="SFLD" id="SFLDF00342">
    <property type="entry name" value="cyclic_dehypoxanthine_futalosi"/>
    <property type="match status" value="1"/>
</dbReference>
<dbReference type="SFLD" id="SFLDG01389">
    <property type="entry name" value="menaquinone_synthsis_involved"/>
    <property type="match status" value="1"/>
</dbReference>
<dbReference type="SMART" id="SM00729">
    <property type="entry name" value="Elp3"/>
    <property type="match status" value="1"/>
</dbReference>
<dbReference type="SUPFAM" id="SSF102114">
    <property type="entry name" value="Radical SAM enzymes"/>
    <property type="match status" value="1"/>
</dbReference>
<dbReference type="PROSITE" id="PS51918">
    <property type="entry name" value="RADICAL_SAM"/>
    <property type="match status" value="1"/>
</dbReference>
<organism>
    <name type="scientific">Halalkalibacterium halodurans (strain ATCC BAA-125 / DSM 18197 / FERM 7344 / JCM 9153 / C-125)</name>
    <name type="common">Bacillus halodurans</name>
    <dbReference type="NCBI Taxonomy" id="272558"/>
    <lineage>
        <taxon>Bacteria</taxon>
        <taxon>Bacillati</taxon>
        <taxon>Bacillota</taxon>
        <taxon>Bacilli</taxon>
        <taxon>Bacillales</taxon>
        <taxon>Bacillaceae</taxon>
        <taxon>Halalkalibacterium (ex Joshi et al. 2022)</taxon>
    </lineage>
</organism>